<sequence>MRLAVNIDHIATLRNARQETQPDPVTAARLAELSGASGIVCHLREDRRHIKDRDLELLRATVQTKLDLEMAMTKEMKAIAIKTKPDLVTLVPEKRQELTTEGGLDVITRKDDLIPYIDELQQHGIPTSLFIEPTPEAITVATEVGAAFVELHTGKYSLLKSPKEIEAELLRLQDAASLAKKFGLRVVAGHGLNYENTAEIKRIKEIEEVSIGHALIARATLMGMSEAVKEMIRLLQ</sequence>
<protein>
    <recommendedName>
        <fullName evidence="1">Pyridoxine 5'-phosphate synthase</fullName>
        <shortName evidence="1">PNP synthase</shortName>
        <ecNumber evidence="1">2.6.99.2</ecNumber>
    </recommendedName>
</protein>
<comment type="function">
    <text evidence="1">Catalyzes the complicated ring closure reaction between the two acyclic compounds 1-deoxy-D-xylulose-5-phosphate (DXP) and 3-amino-2-oxopropyl phosphate (1-amino-acetone-3-phosphate or AAP) to form pyridoxine 5'-phosphate (PNP) and inorganic phosphate.</text>
</comment>
<comment type="catalytic activity">
    <reaction evidence="1">
        <text>3-amino-2-oxopropyl phosphate + 1-deoxy-D-xylulose 5-phosphate = pyridoxine 5'-phosphate + phosphate + 2 H2O + H(+)</text>
        <dbReference type="Rhea" id="RHEA:15265"/>
        <dbReference type="ChEBI" id="CHEBI:15377"/>
        <dbReference type="ChEBI" id="CHEBI:15378"/>
        <dbReference type="ChEBI" id="CHEBI:43474"/>
        <dbReference type="ChEBI" id="CHEBI:57279"/>
        <dbReference type="ChEBI" id="CHEBI:57792"/>
        <dbReference type="ChEBI" id="CHEBI:58589"/>
        <dbReference type="EC" id="2.6.99.2"/>
    </reaction>
</comment>
<comment type="pathway">
    <text evidence="1">Cofactor biosynthesis; pyridoxine 5'-phosphate biosynthesis; pyridoxine 5'-phosphate from D-erythrose 4-phosphate: step 5/5.</text>
</comment>
<comment type="subunit">
    <text evidence="1">Homooctamer; tetramer of dimers.</text>
</comment>
<comment type="subcellular location">
    <subcellularLocation>
        <location evidence="1">Cytoplasm</location>
    </subcellularLocation>
</comment>
<comment type="similarity">
    <text evidence="1">Belongs to the PNP synthase family.</text>
</comment>
<dbReference type="EC" id="2.6.99.2" evidence="1"/>
<dbReference type="EMBL" id="CP001100">
    <property type="protein sequence ID" value="ACF14299.1"/>
    <property type="molecule type" value="Genomic_DNA"/>
</dbReference>
<dbReference type="RefSeq" id="WP_012500383.1">
    <property type="nucleotide sequence ID" value="NC_011026.1"/>
</dbReference>
<dbReference type="SMR" id="B3QTV1"/>
<dbReference type="STRING" id="517418.Ctha_1842"/>
<dbReference type="KEGG" id="cts:Ctha_1842"/>
<dbReference type="eggNOG" id="COG0854">
    <property type="taxonomic scope" value="Bacteria"/>
</dbReference>
<dbReference type="HOGENOM" id="CLU_074563_0_0_10"/>
<dbReference type="OrthoDB" id="9806590at2"/>
<dbReference type="UniPathway" id="UPA00244">
    <property type="reaction ID" value="UER00313"/>
</dbReference>
<dbReference type="Proteomes" id="UP000001208">
    <property type="component" value="Chromosome"/>
</dbReference>
<dbReference type="GO" id="GO:0005829">
    <property type="term" value="C:cytosol"/>
    <property type="evidence" value="ECO:0007669"/>
    <property type="project" value="TreeGrafter"/>
</dbReference>
<dbReference type="GO" id="GO:0033856">
    <property type="term" value="F:pyridoxine 5'-phosphate synthase activity"/>
    <property type="evidence" value="ECO:0007669"/>
    <property type="project" value="UniProtKB-EC"/>
</dbReference>
<dbReference type="GO" id="GO:0008615">
    <property type="term" value="P:pyridoxine biosynthetic process"/>
    <property type="evidence" value="ECO:0007669"/>
    <property type="project" value="UniProtKB-UniRule"/>
</dbReference>
<dbReference type="CDD" id="cd00003">
    <property type="entry name" value="PNPsynthase"/>
    <property type="match status" value="1"/>
</dbReference>
<dbReference type="Gene3D" id="3.20.20.70">
    <property type="entry name" value="Aldolase class I"/>
    <property type="match status" value="1"/>
</dbReference>
<dbReference type="HAMAP" id="MF_00279">
    <property type="entry name" value="PdxJ"/>
    <property type="match status" value="1"/>
</dbReference>
<dbReference type="InterPro" id="IPR013785">
    <property type="entry name" value="Aldolase_TIM"/>
</dbReference>
<dbReference type="InterPro" id="IPR004569">
    <property type="entry name" value="PyrdxlP_synth_PdxJ"/>
</dbReference>
<dbReference type="InterPro" id="IPR036130">
    <property type="entry name" value="Pyridoxine-5'_phos_synth"/>
</dbReference>
<dbReference type="NCBIfam" id="TIGR00559">
    <property type="entry name" value="pdxJ"/>
    <property type="match status" value="1"/>
</dbReference>
<dbReference type="NCBIfam" id="NF003625">
    <property type="entry name" value="PRK05265.1-3"/>
    <property type="match status" value="1"/>
</dbReference>
<dbReference type="NCBIfam" id="NF003627">
    <property type="entry name" value="PRK05265.1-5"/>
    <property type="match status" value="1"/>
</dbReference>
<dbReference type="PANTHER" id="PTHR30456">
    <property type="entry name" value="PYRIDOXINE 5'-PHOSPHATE SYNTHASE"/>
    <property type="match status" value="1"/>
</dbReference>
<dbReference type="PANTHER" id="PTHR30456:SF0">
    <property type="entry name" value="PYRIDOXINE 5'-PHOSPHATE SYNTHASE"/>
    <property type="match status" value="1"/>
</dbReference>
<dbReference type="Pfam" id="PF03740">
    <property type="entry name" value="PdxJ"/>
    <property type="match status" value="1"/>
</dbReference>
<dbReference type="SUPFAM" id="SSF63892">
    <property type="entry name" value="Pyridoxine 5'-phosphate synthase"/>
    <property type="match status" value="1"/>
</dbReference>
<name>PDXJ_CHLT3</name>
<proteinExistence type="inferred from homology"/>
<feature type="chain" id="PRO_1000114804" description="Pyridoxine 5'-phosphate synthase">
    <location>
        <begin position="1"/>
        <end position="236"/>
    </location>
</feature>
<feature type="active site" description="Proton acceptor" evidence="1">
    <location>
        <position position="42"/>
    </location>
</feature>
<feature type="active site" description="Proton acceptor" evidence="1">
    <location>
        <position position="69"/>
    </location>
</feature>
<feature type="active site" description="Proton donor" evidence="1">
    <location>
        <position position="190"/>
    </location>
</feature>
<feature type="binding site" evidence="1">
    <location>
        <position position="6"/>
    </location>
    <ligand>
        <name>3-amino-2-oxopropyl phosphate</name>
        <dbReference type="ChEBI" id="CHEBI:57279"/>
    </ligand>
</feature>
<feature type="binding site" evidence="1">
    <location>
        <begin position="8"/>
        <end position="9"/>
    </location>
    <ligand>
        <name>1-deoxy-D-xylulose 5-phosphate</name>
        <dbReference type="ChEBI" id="CHEBI:57792"/>
    </ligand>
</feature>
<feature type="binding site" evidence="1">
    <location>
        <position position="17"/>
    </location>
    <ligand>
        <name>3-amino-2-oxopropyl phosphate</name>
        <dbReference type="ChEBI" id="CHEBI:57279"/>
    </ligand>
</feature>
<feature type="binding site" evidence="1">
    <location>
        <position position="44"/>
    </location>
    <ligand>
        <name>1-deoxy-D-xylulose 5-phosphate</name>
        <dbReference type="ChEBI" id="CHEBI:57792"/>
    </ligand>
</feature>
<feature type="binding site" evidence="1">
    <location>
        <position position="49"/>
    </location>
    <ligand>
        <name>1-deoxy-D-xylulose 5-phosphate</name>
        <dbReference type="ChEBI" id="CHEBI:57792"/>
    </ligand>
</feature>
<feature type="binding site" evidence="1">
    <location>
        <position position="99"/>
    </location>
    <ligand>
        <name>1-deoxy-D-xylulose 5-phosphate</name>
        <dbReference type="ChEBI" id="CHEBI:57792"/>
    </ligand>
</feature>
<feature type="binding site" evidence="1">
    <location>
        <position position="191"/>
    </location>
    <ligand>
        <name>3-amino-2-oxopropyl phosphate</name>
        <dbReference type="ChEBI" id="CHEBI:57279"/>
    </ligand>
</feature>
<feature type="binding site" evidence="1">
    <location>
        <begin position="212"/>
        <end position="213"/>
    </location>
    <ligand>
        <name>3-amino-2-oxopropyl phosphate</name>
        <dbReference type="ChEBI" id="CHEBI:57279"/>
    </ligand>
</feature>
<feature type="site" description="Transition state stabilizer" evidence="1">
    <location>
        <position position="150"/>
    </location>
</feature>
<organism>
    <name type="scientific">Chloroherpeton thalassium (strain ATCC 35110 / GB-78)</name>
    <dbReference type="NCBI Taxonomy" id="517418"/>
    <lineage>
        <taxon>Bacteria</taxon>
        <taxon>Pseudomonadati</taxon>
        <taxon>Chlorobiota</taxon>
        <taxon>Chlorobiia</taxon>
        <taxon>Chlorobiales</taxon>
        <taxon>Chloroherpetonaceae</taxon>
        <taxon>Chloroherpeton</taxon>
    </lineage>
</organism>
<accession>B3QTV1</accession>
<keyword id="KW-0963">Cytoplasm</keyword>
<keyword id="KW-0664">Pyridoxine biosynthesis</keyword>
<keyword id="KW-1185">Reference proteome</keyword>
<keyword id="KW-0808">Transferase</keyword>
<gene>
    <name evidence="1" type="primary">pdxJ</name>
    <name type="ordered locus">Ctha_1842</name>
</gene>
<reference key="1">
    <citation type="submission" date="2008-06" db="EMBL/GenBank/DDBJ databases">
        <title>Complete sequence of Chloroherpeton thalassium ATCC 35110.</title>
        <authorList>
            <consortium name="US DOE Joint Genome Institute"/>
            <person name="Lucas S."/>
            <person name="Copeland A."/>
            <person name="Lapidus A."/>
            <person name="Glavina del Rio T."/>
            <person name="Dalin E."/>
            <person name="Tice H."/>
            <person name="Bruce D."/>
            <person name="Goodwin L."/>
            <person name="Pitluck S."/>
            <person name="Schmutz J."/>
            <person name="Larimer F."/>
            <person name="Land M."/>
            <person name="Hauser L."/>
            <person name="Kyrpides N."/>
            <person name="Mikhailova N."/>
            <person name="Liu Z."/>
            <person name="Li T."/>
            <person name="Zhao F."/>
            <person name="Overmann J."/>
            <person name="Bryant D.A."/>
            <person name="Richardson P."/>
        </authorList>
    </citation>
    <scope>NUCLEOTIDE SEQUENCE [LARGE SCALE GENOMIC DNA]</scope>
    <source>
        <strain>ATCC 35110 / GB-78</strain>
    </source>
</reference>
<evidence type="ECO:0000255" key="1">
    <source>
        <dbReference type="HAMAP-Rule" id="MF_00279"/>
    </source>
</evidence>